<organism>
    <name type="scientific">Cuscuta reflexa</name>
    <name type="common">Southern Asian dodder</name>
    <dbReference type="NCBI Taxonomy" id="4129"/>
    <lineage>
        <taxon>Eukaryota</taxon>
        <taxon>Viridiplantae</taxon>
        <taxon>Streptophyta</taxon>
        <taxon>Embryophyta</taxon>
        <taxon>Tracheophyta</taxon>
        <taxon>Spermatophyta</taxon>
        <taxon>Magnoliopsida</taxon>
        <taxon>eudicotyledons</taxon>
        <taxon>Gunneridae</taxon>
        <taxon>Pentapetalae</taxon>
        <taxon>asterids</taxon>
        <taxon>lamiids</taxon>
        <taxon>Solanales</taxon>
        <taxon>Convolvulaceae</taxon>
        <taxon>Cuscuteae</taxon>
        <taxon>Cuscuta</taxon>
        <taxon>Cuscuta subgen. Monogynella</taxon>
    </lineage>
</organism>
<comment type="function">
    <text evidence="1">Cleaves peptides in various proteins in a process that requires ATP hydrolysis. Has a chymotrypsin-like activity. Plays a major role in the degradation of misfolded proteins (By similarity).</text>
</comment>
<comment type="catalytic activity">
    <reaction>
        <text>Hydrolysis of proteins to small peptides in the presence of ATP and magnesium. alpha-casein is the usual test substrate. In the absence of ATP, only oligopeptides shorter than five residues are hydrolyzed (such as succinyl-Leu-Tyr-|-NHMec, and Leu-Tyr-Leu-|-Tyr-Trp, in which cleavage of the -Tyr-|-Leu- and -Tyr-|-Trp bonds also occurs).</text>
        <dbReference type="EC" id="3.4.21.92"/>
    </reaction>
</comment>
<comment type="subunit">
    <text>Component of the plastid Clp protease core complex.</text>
</comment>
<comment type="subcellular location">
    <subcellularLocation>
        <location>Plastid</location>
    </subcellularLocation>
</comment>
<comment type="similarity">
    <text evidence="2">Belongs to the peptidase S14 family.</text>
</comment>
<comment type="caution">
    <text evidence="2">Young tissue from this organism is photosynthetic and contains some thylakoids, although the photosynthetic activity does not exceed the light compensation point.</text>
</comment>
<feature type="chain" id="PRO_0000309297" description="ATP-dependent Clp protease proteolytic subunit">
    <location>
        <begin position="1"/>
        <end position="201"/>
    </location>
</feature>
<feature type="active site" description="Nucleophile" evidence="1">
    <location>
        <position position="101"/>
    </location>
</feature>
<feature type="active site" evidence="1">
    <location>
        <position position="126"/>
    </location>
</feature>
<dbReference type="EC" id="3.4.21.92"/>
<dbReference type="EMBL" id="AM711640">
    <property type="protein sequence ID" value="CAM98416.1"/>
    <property type="molecule type" value="Genomic_DNA"/>
</dbReference>
<dbReference type="RefSeq" id="YP_001430129.1">
    <property type="nucleotide sequence ID" value="NC_009766.1"/>
</dbReference>
<dbReference type="SMR" id="A7M988"/>
<dbReference type="MEROPS" id="S14.002"/>
<dbReference type="GeneID" id="5536666"/>
<dbReference type="GO" id="GO:0009368">
    <property type="term" value="C:endopeptidase Clp complex"/>
    <property type="evidence" value="ECO:0007669"/>
    <property type="project" value="TreeGrafter"/>
</dbReference>
<dbReference type="GO" id="GO:0009532">
    <property type="term" value="C:plastid stroma"/>
    <property type="evidence" value="ECO:0007669"/>
    <property type="project" value="UniProtKB-ARBA"/>
</dbReference>
<dbReference type="GO" id="GO:0004176">
    <property type="term" value="F:ATP-dependent peptidase activity"/>
    <property type="evidence" value="ECO:0007669"/>
    <property type="project" value="InterPro"/>
</dbReference>
<dbReference type="GO" id="GO:0051117">
    <property type="term" value="F:ATPase binding"/>
    <property type="evidence" value="ECO:0007669"/>
    <property type="project" value="TreeGrafter"/>
</dbReference>
<dbReference type="GO" id="GO:0004252">
    <property type="term" value="F:serine-type endopeptidase activity"/>
    <property type="evidence" value="ECO:0007669"/>
    <property type="project" value="UniProtKB-UniRule"/>
</dbReference>
<dbReference type="GO" id="GO:0006515">
    <property type="term" value="P:protein quality control for misfolded or incompletely synthesized proteins"/>
    <property type="evidence" value="ECO:0007669"/>
    <property type="project" value="TreeGrafter"/>
</dbReference>
<dbReference type="CDD" id="cd07017">
    <property type="entry name" value="S14_ClpP_2"/>
    <property type="match status" value="1"/>
</dbReference>
<dbReference type="FunFam" id="3.90.226.10:FF:000006">
    <property type="entry name" value="ATP-dependent Clp protease proteolytic subunit"/>
    <property type="match status" value="1"/>
</dbReference>
<dbReference type="Gene3D" id="3.90.226.10">
    <property type="entry name" value="2-enoyl-CoA Hydratase, Chain A, domain 1"/>
    <property type="match status" value="1"/>
</dbReference>
<dbReference type="HAMAP" id="MF_00444">
    <property type="entry name" value="ClpP"/>
    <property type="match status" value="1"/>
</dbReference>
<dbReference type="InterPro" id="IPR001907">
    <property type="entry name" value="ClpP"/>
</dbReference>
<dbReference type="InterPro" id="IPR029045">
    <property type="entry name" value="ClpP/crotonase-like_dom_sf"/>
</dbReference>
<dbReference type="InterPro" id="IPR023562">
    <property type="entry name" value="ClpP/TepA"/>
</dbReference>
<dbReference type="InterPro" id="IPR033135">
    <property type="entry name" value="ClpP_His_AS"/>
</dbReference>
<dbReference type="InterPro" id="IPR018215">
    <property type="entry name" value="ClpP_Ser_AS"/>
</dbReference>
<dbReference type="PANTHER" id="PTHR10381">
    <property type="entry name" value="ATP-DEPENDENT CLP PROTEASE PROTEOLYTIC SUBUNIT"/>
    <property type="match status" value="1"/>
</dbReference>
<dbReference type="PANTHER" id="PTHR10381:SF15">
    <property type="entry name" value="CHLOROPLASTIC ATP-DEPENDENT CLP PROTEASE PROTEOLYTIC SUBUNIT 1"/>
    <property type="match status" value="1"/>
</dbReference>
<dbReference type="Pfam" id="PF00574">
    <property type="entry name" value="CLP_protease"/>
    <property type="match status" value="1"/>
</dbReference>
<dbReference type="PRINTS" id="PR00127">
    <property type="entry name" value="CLPPROTEASEP"/>
</dbReference>
<dbReference type="SUPFAM" id="SSF52096">
    <property type="entry name" value="ClpP/crotonase"/>
    <property type="match status" value="1"/>
</dbReference>
<dbReference type="PROSITE" id="PS00382">
    <property type="entry name" value="CLP_PROTEASE_HIS"/>
    <property type="match status" value="1"/>
</dbReference>
<dbReference type="PROSITE" id="PS00381">
    <property type="entry name" value="CLP_PROTEASE_SER"/>
    <property type="match status" value="1"/>
</dbReference>
<gene>
    <name type="primary">clpP</name>
</gene>
<evidence type="ECO:0000250" key="1"/>
<evidence type="ECO:0000305" key="2"/>
<name>CLPP_CUSRE</name>
<proteinExistence type="inferred from homology"/>
<accession>A7M988</accession>
<reference key="1">
    <citation type="journal article" date="2007" name="BMC Plant Biol.">
        <title>Complete DNA sequences of the plastid genomes of two parasitic flowering plant species, Cuscuta reflexa and Cuscuta gronovii.</title>
        <authorList>
            <person name="Funk H.T."/>
            <person name="Berg S."/>
            <person name="Krupinska K."/>
            <person name="Maier U.-G."/>
            <person name="Krause K."/>
        </authorList>
    </citation>
    <scope>NUCLEOTIDE SEQUENCE [LARGE SCALE GENOMIC DNA]</scope>
</reference>
<sequence length="201" mass="22593">MPIGVPRVRFQYRRDRSRVWIDIYNRLYRERCLFLAHVVESQIANQLVGLFIYLGVQDETKDIFLFINSPGGGIISGFAIYDTMQFVRPDIQTICVGLAASMGSFLLVGGAITKRLAFPHARVMIHQPMSAFFETQTVEAILEAEELLKLRESLAKVYVQRTGKPDWVIAEDMERDVFLSATEAQSYGIVDVVGVALASKG</sequence>
<protein>
    <recommendedName>
        <fullName>ATP-dependent Clp protease proteolytic subunit</fullName>
        <ecNumber>3.4.21.92</ecNumber>
    </recommendedName>
    <alternativeName>
        <fullName>Endopeptidase Clp</fullName>
    </alternativeName>
</protein>
<keyword id="KW-0378">Hydrolase</keyword>
<keyword id="KW-0934">Plastid</keyword>
<keyword id="KW-0645">Protease</keyword>
<keyword id="KW-0720">Serine protease</keyword>
<geneLocation type="plastid"/>